<organism>
    <name type="scientific">Zygosaccharomyces rouxii (strain ATCC 2623 / CBS 732 / NBRC 1130 / NCYC 568 / NRRL Y-229)</name>
    <dbReference type="NCBI Taxonomy" id="559307"/>
    <lineage>
        <taxon>Eukaryota</taxon>
        <taxon>Fungi</taxon>
        <taxon>Dikarya</taxon>
        <taxon>Ascomycota</taxon>
        <taxon>Saccharomycotina</taxon>
        <taxon>Saccharomycetes</taxon>
        <taxon>Saccharomycetales</taxon>
        <taxon>Saccharomycetaceae</taxon>
        <taxon>Zygosaccharomyces</taxon>
    </lineage>
</organism>
<reference key="1">
    <citation type="journal article" date="2009" name="Genome Res.">
        <title>Comparative genomics of protoploid Saccharomycetaceae.</title>
        <authorList>
            <consortium name="The Genolevures Consortium"/>
            <person name="Souciet J.-L."/>
            <person name="Dujon B."/>
            <person name="Gaillardin C."/>
            <person name="Johnston M."/>
            <person name="Baret P.V."/>
            <person name="Cliften P."/>
            <person name="Sherman D.J."/>
            <person name="Weissenbach J."/>
            <person name="Westhof E."/>
            <person name="Wincker P."/>
            <person name="Jubin C."/>
            <person name="Poulain J."/>
            <person name="Barbe V."/>
            <person name="Segurens B."/>
            <person name="Artiguenave F."/>
            <person name="Anthouard V."/>
            <person name="Vacherie B."/>
            <person name="Val M.-E."/>
            <person name="Fulton R.S."/>
            <person name="Minx P."/>
            <person name="Wilson R."/>
            <person name="Durrens P."/>
            <person name="Jean G."/>
            <person name="Marck C."/>
            <person name="Martin T."/>
            <person name="Nikolski M."/>
            <person name="Rolland T."/>
            <person name="Seret M.-L."/>
            <person name="Casaregola S."/>
            <person name="Despons L."/>
            <person name="Fairhead C."/>
            <person name="Fischer G."/>
            <person name="Lafontaine I."/>
            <person name="Leh V."/>
            <person name="Lemaire M."/>
            <person name="de Montigny J."/>
            <person name="Neuveglise C."/>
            <person name="Thierry A."/>
            <person name="Blanc-Lenfle I."/>
            <person name="Bleykasten C."/>
            <person name="Diffels J."/>
            <person name="Fritsch E."/>
            <person name="Frangeul L."/>
            <person name="Goeffon A."/>
            <person name="Jauniaux N."/>
            <person name="Kachouri-Lafond R."/>
            <person name="Payen C."/>
            <person name="Potier S."/>
            <person name="Pribylova L."/>
            <person name="Ozanne C."/>
            <person name="Richard G.-F."/>
            <person name="Sacerdot C."/>
            <person name="Straub M.-L."/>
            <person name="Talla E."/>
        </authorList>
    </citation>
    <scope>NUCLEOTIDE SEQUENCE [LARGE SCALE GENOMIC DNA]</scope>
    <source>
        <strain>ATCC 2623 / CBS 732 / BCRC 21506 / NBRC 1130 / NCYC 568 / NRRL Y-229</strain>
    </source>
</reference>
<evidence type="ECO:0000250" key="1"/>
<evidence type="ECO:0000255" key="2"/>
<evidence type="ECO:0000256" key="3">
    <source>
        <dbReference type="SAM" id="MobiDB-lite"/>
    </source>
</evidence>
<evidence type="ECO:0000305" key="4"/>
<gene>
    <name type="primary">MPS2</name>
    <name type="ordered locus">ZYRO0G08712g</name>
</gene>
<sequence length="343" mass="39859">MDFDKSSSSLVLDLAWNQVDKKNQDFIYAKDFPALIMSIEEILSRGQQTPLAFLSNTGKSVIDTFAREKEFFKIYRDEFKEIFHGLVGKTFKDTIEGTNVSRSVLDEQGQEPDVSTTPTRQQRSSPRKVNRLLKNLETRVASMKDELKFKDEILAEKDRELIQLTRKLSDYKDKYEFVQRQFSFYKDHGESPRRNSSESEQLNLEQNASTKHEFIISELKRKLQEQTLAISNLKEQLQRGEGAGVLYTNYSKRYNPLHNDGPMVLVLATLVFLTIILLIGSMIWVTGGKDDSNSFSQYSWWENNSLLSRIGWFFRDWSDTGVDYVNFEPSSDAYERIMGIRRI</sequence>
<accession>C5E006</accession>
<keyword id="KW-0175">Coiled coil</keyword>
<keyword id="KW-0963">Cytoplasm</keyword>
<keyword id="KW-0206">Cytoskeleton</keyword>
<keyword id="KW-0472">Membrane</keyword>
<keyword id="KW-0539">Nucleus</keyword>
<keyword id="KW-1185">Reference proteome</keyword>
<keyword id="KW-0812">Transmembrane</keyword>
<keyword id="KW-1133">Transmembrane helix</keyword>
<name>MPS2_ZYGRC</name>
<comment type="function">
    <text evidence="1">Component of the spindle pole body (SPB) required for insertion of the nascent SPB into the nuclear envelope and for the proper execution of spindle pole body (SPB) duplication.</text>
</comment>
<comment type="subcellular location">
    <subcellularLocation>
        <location evidence="1">Nucleus membrane</location>
        <topology evidence="1">Single-pass membrane protein</topology>
    </subcellularLocation>
    <subcellularLocation>
        <location evidence="1">Cytoplasm</location>
        <location evidence="1">Cytoskeleton</location>
        <location evidence="1">Microtubule organizing center</location>
        <location evidence="1">Spindle pole body</location>
    </subcellularLocation>
</comment>
<comment type="similarity">
    <text evidence="4">Belongs to the MPS2 family.</text>
</comment>
<dbReference type="EMBL" id="CU928179">
    <property type="protein sequence ID" value="CAR29440.1"/>
    <property type="molecule type" value="Genomic_DNA"/>
</dbReference>
<dbReference type="RefSeq" id="XP_002498373.1">
    <property type="nucleotide sequence ID" value="XM_002498328.1"/>
</dbReference>
<dbReference type="SMR" id="C5E006"/>
<dbReference type="FunCoup" id="C5E006">
    <property type="interactions" value="164"/>
</dbReference>
<dbReference type="STRING" id="559307.C5E006"/>
<dbReference type="GeneID" id="8206176"/>
<dbReference type="KEGG" id="zro:ZYRO0G08712g"/>
<dbReference type="HOGENOM" id="CLU_069890_0_0_1"/>
<dbReference type="InParanoid" id="C5E006"/>
<dbReference type="Proteomes" id="UP000008536">
    <property type="component" value="Chromosome G"/>
</dbReference>
<dbReference type="GO" id="GO:0005737">
    <property type="term" value="C:cytoplasm"/>
    <property type="evidence" value="ECO:0007669"/>
    <property type="project" value="UniProtKB-KW"/>
</dbReference>
<dbReference type="GO" id="GO:0031965">
    <property type="term" value="C:nuclear membrane"/>
    <property type="evidence" value="ECO:0007669"/>
    <property type="project" value="UniProtKB-SubCell"/>
</dbReference>
<dbReference type="GO" id="GO:0005816">
    <property type="term" value="C:spindle pole body"/>
    <property type="evidence" value="ECO:0007669"/>
    <property type="project" value="UniProtKB-SubCell"/>
</dbReference>
<dbReference type="GO" id="GO:0071988">
    <property type="term" value="P:protein localization to spindle pole body"/>
    <property type="evidence" value="ECO:0007669"/>
    <property type="project" value="InterPro"/>
</dbReference>
<dbReference type="GO" id="GO:0030474">
    <property type="term" value="P:spindle pole body duplication"/>
    <property type="evidence" value="ECO:0007669"/>
    <property type="project" value="InterPro"/>
</dbReference>
<dbReference type="InterPro" id="IPR031433">
    <property type="entry name" value="Mps2"/>
</dbReference>
<dbReference type="Pfam" id="PF17060">
    <property type="entry name" value="MPS2"/>
    <property type="match status" value="2"/>
</dbReference>
<proteinExistence type="inferred from homology"/>
<protein>
    <recommendedName>
        <fullName>Monopolar spindle protein 2</fullName>
    </recommendedName>
</protein>
<feature type="chain" id="PRO_0000409169" description="Monopolar spindle protein 2">
    <location>
        <begin position="1"/>
        <end position="343"/>
    </location>
</feature>
<feature type="transmembrane region" description="Helical" evidence="2">
    <location>
        <begin position="264"/>
        <end position="284"/>
    </location>
</feature>
<feature type="region of interest" description="Disordered" evidence="3">
    <location>
        <begin position="102"/>
        <end position="129"/>
    </location>
</feature>
<feature type="region of interest" description="Disordered" evidence="3">
    <location>
        <begin position="187"/>
        <end position="206"/>
    </location>
</feature>
<feature type="coiled-coil region" evidence="2">
    <location>
        <begin position="127"/>
        <end position="243"/>
    </location>
</feature>
<feature type="compositionally biased region" description="Polar residues" evidence="3">
    <location>
        <begin position="113"/>
        <end position="124"/>
    </location>
</feature>
<feature type="compositionally biased region" description="Basic and acidic residues" evidence="3">
    <location>
        <begin position="187"/>
        <end position="197"/>
    </location>
</feature>